<evidence type="ECO:0000250" key="1"/>
<evidence type="ECO:0000250" key="2">
    <source>
        <dbReference type="UniProtKB" id="O00418"/>
    </source>
</evidence>
<evidence type="ECO:0000250" key="3">
    <source>
        <dbReference type="UniProtKB" id="P70531"/>
    </source>
</evidence>
<evidence type="ECO:0000255" key="4">
    <source>
        <dbReference type="PROSITE-ProRule" id="PRU00501"/>
    </source>
</evidence>
<evidence type="ECO:0000256" key="5">
    <source>
        <dbReference type="SAM" id="MobiDB-lite"/>
    </source>
</evidence>
<evidence type="ECO:0000269" key="6">
    <source>
    </source>
</evidence>
<evidence type="ECO:0000269" key="7">
    <source>
    </source>
</evidence>
<evidence type="ECO:0000305" key="8"/>
<evidence type="ECO:0007744" key="9">
    <source>
    </source>
</evidence>
<evidence type="ECO:0007744" key="10">
    <source>
    </source>
</evidence>
<protein>
    <recommendedName>
        <fullName>Eukaryotic elongation factor 2 kinase</fullName>
        <shortName>eEF-2 kinase</shortName>
        <shortName>eEF-2K</shortName>
        <ecNumber evidence="7">2.7.11.20</ecNumber>
    </recommendedName>
    <alternativeName>
        <fullName>Calcium/calmodulin-dependent eukaryotic elongation factor 2 kinase</fullName>
    </alternativeName>
</protein>
<comment type="function">
    <text evidence="6 7">Threonine kinase that regulates protein synthesis by controlling the rate of peptide chain elongation (PubMed:34815424, PubMed:9144159). Upon activation by a variety of upstream kinases including AMPK or TRPM7, phosphorylates the elongation factor EEF2 at a single site, renders it unable to bind ribosomes and thus inactive (PubMed:34815424, PubMed:9144159). In turn, the rate of protein synthesis is reduced (PubMed:34815424, PubMed:9144159).</text>
</comment>
<comment type="catalytic activity">
    <reaction evidence="6 7">
        <text>[translation elongation factor 2] + ATP = [translation elongation factor 2]-phosphate + ADP + H(+)</text>
        <dbReference type="Rhea" id="RHEA:21436"/>
        <dbReference type="Rhea" id="RHEA-COMP:11268"/>
        <dbReference type="Rhea" id="RHEA-COMP:11269"/>
        <dbReference type="ChEBI" id="CHEBI:15378"/>
        <dbReference type="ChEBI" id="CHEBI:30616"/>
        <dbReference type="ChEBI" id="CHEBI:43176"/>
        <dbReference type="ChEBI" id="CHEBI:68546"/>
        <dbReference type="ChEBI" id="CHEBI:456216"/>
        <dbReference type="EC" id="2.7.11.20"/>
    </reaction>
</comment>
<comment type="activity regulation">
    <text evidence="3">Undergoes calcium/calmodulin-dependent intramolecular autophosphorylation, and this results in it becoming partially calcium/calmodulin-independent.</text>
</comment>
<comment type="subunit">
    <text evidence="2 8">Monomer or homodimer (Probable). Interacts with Calmodulin/CALM1; this interaction is strictly required for phosphorylation activity (By similarity).</text>
</comment>
<comment type="tissue specificity">
    <text evidence="7">Ubiquitously expressed (PubMed:9144159). Particularly abundant in skeletal muscle and heart (PubMed:9144159).</text>
</comment>
<comment type="PTM">
    <text evidence="1">Autophosphorylated at multiple residues, Thr-347 being the major site. Phosphorylated by AMP-activated protein kinase AMPK at Ser-397 leading to EEF2K activation and protein synthesis inhibition. Phosphorylated by TRPM7 at Ser-77 resulting in improved protein stability, higher EE2F phosphorylated and subsequently reduced rate of protein synthesis. Phosphorylation by other kinases such as CDK1 and MAPK13 at Ser-358 or RPS6KA1 and RPS6KB1 at Ser-365 instead decrease EEF2K activity and promote protein synthesis (By similarity).</text>
</comment>
<comment type="similarity">
    <text evidence="8">Belongs to the protein kinase superfamily. Alpha-type protein kinase family.</text>
</comment>
<name>EF2K_MOUSE</name>
<dbReference type="EC" id="2.7.11.20" evidence="7"/>
<dbReference type="EMBL" id="U93848">
    <property type="protein sequence ID" value="AAB58271.1"/>
    <property type="molecule type" value="mRNA"/>
</dbReference>
<dbReference type="EMBL" id="BC003433">
    <property type="protein sequence ID" value="AAH03433.1"/>
    <property type="molecule type" value="mRNA"/>
</dbReference>
<dbReference type="CCDS" id="CCDS21796.1"/>
<dbReference type="RefSeq" id="NP_001254639.1">
    <property type="nucleotide sequence ID" value="NM_001267710.2"/>
</dbReference>
<dbReference type="RefSeq" id="NP_001254640.1">
    <property type="nucleotide sequence ID" value="NM_001267711.2"/>
</dbReference>
<dbReference type="RefSeq" id="NP_001399257.1">
    <property type="nucleotide sequence ID" value="NM_001412328.1"/>
</dbReference>
<dbReference type="RefSeq" id="NP_001399258.1">
    <property type="nucleotide sequence ID" value="NM_001412329.1"/>
</dbReference>
<dbReference type="RefSeq" id="NP_001399259.1">
    <property type="nucleotide sequence ID" value="NM_001412330.1"/>
</dbReference>
<dbReference type="RefSeq" id="NP_031934.1">
    <property type="nucleotide sequence ID" value="NM_007908.5"/>
</dbReference>
<dbReference type="RefSeq" id="XP_006507405.1">
    <property type="nucleotide sequence ID" value="XM_006507342.3"/>
</dbReference>
<dbReference type="RefSeq" id="XP_006507406.1">
    <property type="nucleotide sequence ID" value="XM_006507343.3"/>
</dbReference>
<dbReference type="SMR" id="O08796"/>
<dbReference type="FunCoup" id="O08796">
    <property type="interactions" value="314"/>
</dbReference>
<dbReference type="IntAct" id="O08796">
    <property type="interactions" value="1"/>
</dbReference>
<dbReference type="STRING" id="10090.ENSMUSP00000046595"/>
<dbReference type="GlyGen" id="O08796">
    <property type="glycosylation" value="1 site, 1 O-linked glycan (1 site)"/>
</dbReference>
<dbReference type="iPTMnet" id="O08796"/>
<dbReference type="PhosphoSitePlus" id="O08796"/>
<dbReference type="jPOST" id="O08796"/>
<dbReference type="PaxDb" id="10090-ENSMUSP00000046595"/>
<dbReference type="PeptideAtlas" id="O08796"/>
<dbReference type="ProteomicsDB" id="277760"/>
<dbReference type="Pumba" id="O08796"/>
<dbReference type="Antibodypedia" id="25835">
    <property type="antibodies" value="475 antibodies from 35 providers"/>
</dbReference>
<dbReference type="DNASU" id="13631"/>
<dbReference type="Ensembl" id="ENSMUST00000047875.16">
    <property type="protein sequence ID" value="ENSMUSP00000046595.9"/>
    <property type="gene ID" value="ENSMUSG00000035064.18"/>
</dbReference>
<dbReference type="Ensembl" id="ENSMUST00000106488.3">
    <property type="protein sequence ID" value="ENSMUSP00000102097.2"/>
    <property type="gene ID" value="ENSMUSG00000035064.18"/>
</dbReference>
<dbReference type="Ensembl" id="ENSMUST00000106489.9">
    <property type="protein sequence ID" value="ENSMUSP00000102098.2"/>
    <property type="gene ID" value="ENSMUSG00000035064.18"/>
</dbReference>
<dbReference type="GeneID" id="13631"/>
<dbReference type="KEGG" id="mmu:13631"/>
<dbReference type="UCSC" id="uc009jnb.3">
    <property type="organism name" value="mouse"/>
</dbReference>
<dbReference type="AGR" id="MGI:1195261"/>
<dbReference type="CTD" id="29904"/>
<dbReference type="MGI" id="MGI:1195261">
    <property type="gene designation" value="Eef2k"/>
</dbReference>
<dbReference type="VEuPathDB" id="HostDB:ENSMUSG00000035064"/>
<dbReference type="eggNOG" id="ENOG502QVA3">
    <property type="taxonomic scope" value="Eukaryota"/>
</dbReference>
<dbReference type="GeneTree" id="ENSGT00940000157839"/>
<dbReference type="HOGENOM" id="CLU_382143_0_0_1"/>
<dbReference type="InParanoid" id="O08796"/>
<dbReference type="OMA" id="CLQMEAK"/>
<dbReference type="OrthoDB" id="301415at2759"/>
<dbReference type="PhylomeDB" id="O08796"/>
<dbReference type="TreeFam" id="TF316085"/>
<dbReference type="BRENDA" id="2.7.11.20">
    <property type="organism ID" value="3474"/>
</dbReference>
<dbReference type="Reactome" id="R-MMU-166208">
    <property type="pathway name" value="mTORC1-mediated signalling"/>
</dbReference>
<dbReference type="BioGRID-ORCS" id="13631">
    <property type="hits" value="3 hits in 81 CRISPR screens"/>
</dbReference>
<dbReference type="ChiTaRS" id="Eef2k">
    <property type="organism name" value="mouse"/>
</dbReference>
<dbReference type="PRO" id="PR:O08796"/>
<dbReference type="Proteomes" id="UP000000589">
    <property type="component" value="Chromosome 7"/>
</dbReference>
<dbReference type="RNAct" id="O08796">
    <property type="molecule type" value="protein"/>
</dbReference>
<dbReference type="Bgee" id="ENSMUSG00000035064">
    <property type="expression patterns" value="Expressed in ascending aorta and 239 other cell types or tissues"/>
</dbReference>
<dbReference type="ExpressionAtlas" id="O08796">
    <property type="expression patterns" value="baseline and differential"/>
</dbReference>
<dbReference type="GO" id="GO:0043197">
    <property type="term" value="C:dendritic spine"/>
    <property type="evidence" value="ECO:0007669"/>
    <property type="project" value="Ensembl"/>
</dbReference>
<dbReference type="GO" id="GO:0098978">
    <property type="term" value="C:glutamatergic synapse"/>
    <property type="evidence" value="ECO:0007669"/>
    <property type="project" value="Ensembl"/>
</dbReference>
<dbReference type="GO" id="GO:0014069">
    <property type="term" value="C:postsynaptic density"/>
    <property type="evidence" value="ECO:0007669"/>
    <property type="project" value="Ensembl"/>
</dbReference>
<dbReference type="GO" id="GO:0005524">
    <property type="term" value="F:ATP binding"/>
    <property type="evidence" value="ECO:0007669"/>
    <property type="project" value="UniProtKB-KW"/>
</dbReference>
<dbReference type="GO" id="GO:0005509">
    <property type="term" value="F:calcium ion binding"/>
    <property type="evidence" value="ECO:0007669"/>
    <property type="project" value="InterPro"/>
</dbReference>
<dbReference type="GO" id="GO:0005516">
    <property type="term" value="F:calmodulin binding"/>
    <property type="evidence" value="ECO:0000314"/>
    <property type="project" value="UniProtKB"/>
</dbReference>
<dbReference type="GO" id="GO:0004686">
    <property type="term" value="F:elongation factor-2 kinase activity"/>
    <property type="evidence" value="ECO:0000314"/>
    <property type="project" value="UniProtKB"/>
</dbReference>
<dbReference type="GO" id="GO:0008135">
    <property type="term" value="F:translation factor activity, RNA binding"/>
    <property type="evidence" value="ECO:0000304"/>
    <property type="project" value="UniProtKB"/>
</dbReference>
<dbReference type="GO" id="GO:0071454">
    <property type="term" value="P:cellular response to anoxia"/>
    <property type="evidence" value="ECO:0007669"/>
    <property type="project" value="Ensembl"/>
</dbReference>
<dbReference type="GO" id="GO:1990416">
    <property type="term" value="P:cellular response to brain-derived neurotrophic factor stimulus"/>
    <property type="evidence" value="ECO:0007669"/>
    <property type="project" value="Ensembl"/>
</dbReference>
<dbReference type="GO" id="GO:0071277">
    <property type="term" value="P:cellular response to calcium ion"/>
    <property type="evidence" value="ECO:0007669"/>
    <property type="project" value="Ensembl"/>
</dbReference>
<dbReference type="GO" id="GO:0071320">
    <property type="term" value="P:cellular response to cAMP"/>
    <property type="evidence" value="ECO:0007669"/>
    <property type="project" value="Ensembl"/>
</dbReference>
<dbReference type="GO" id="GO:0032869">
    <property type="term" value="P:cellular response to insulin stimulus"/>
    <property type="evidence" value="ECO:0007669"/>
    <property type="project" value="Ensembl"/>
</dbReference>
<dbReference type="GO" id="GO:0043066">
    <property type="term" value="P:negative regulation of apoptotic process"/>
    <property type="evidence" value="ECO:0007669"/>
    <property type="project" value="Ensembl"/>
</dbReference>
<dbReference type="GO" id="GO:0061003">
    <property type="term" value="P:positive regulation of dendritic spine morphogenesis"/>
    <property type="evidence" value="ECO:0007669"/>
    <property type="project" value="Ensembl"/>
</dbReference>
<dbReference type="GO" id="GO:0045807">
    <property type="term" value="P:positive regulation of endocytosis"/>
    <property type="evidence" value="ECO:0007669"/>
    <property type="project" value="Ensembl"/>
</dbReference>
<dbReference type="GO" id="GO:0051965">
    <property type="term" value="P:positive regulation of synapse assembly"/>
    <property type="evidence" value="ECO:0007669"/>
    <property type="project" value="Ensembl"/>
</dbReference>
<dbReference type="GO" id="GO:0031952">
    <property type="term" value="P:regulation of protein autophosphorylation"/>
    <property type="evidence" value="ECO:0000314"/>
    <property type="project" value="UniProtKB"/>
</dbReference>
<dbReference type="GO" id="GO:0140245">
    <property type="term" value="P:regulation of translation at postsynapse"/>
    <property type="evidence" value="ECO:0007669"/>
    <property type="project" value="Ensembl"/>
</dbReference>
<dbReference type="GO" id="GO:0002931">
    <property type="term" value="P:response to ischemia"/>
    <property type="evidence" value="ECO:0007669"/>
    <property type="project" value="Ensembl"/>
</dbReference>
<dbReference type="GO" id="GO:1990637">
    <property type="term" value="P:response to prolactin"/>
    <property type="evidence" value="ECO:0007669"/>
    <property type="project" value="Ensembl"/>
</dbReference>
<dbReference type="GO" id="GO:0006414">
    <property type="term" value="P:translational elongation"/>
    <property type="evidence" value="ECO:0000304"/>
    <property type="project" value="UniProtKB"/>
</dbReference>
<dbReference type="CDD" id="cd16967">
    <property type="entry name" value="Alpha_kinase_eEF2K"/>
    <property type="match status" value="1"/>
</dbReference>
<dbReference type="FunFam" id="1.25.40.10:FF:000229">
    <property type="entry name" value="Eukaryotic elongation factor 2 kinase"/>
    <property type="match status" value="1"/>
</dbReference>
<dbReference type="FunFam" id="3.20.200.10:FF:000002">
    <property type="entry name" value="Eukaryotic elongation factor 2 kinase"/>
    <property type="match status" value="1"/>
</dbReference>
<dbReference type="FunFam" id="3.30.200.20:FF:000230">
    <property type="entry name" value="Eukaryotic elongation factor 2 kinase"/>
    <property type="match status" value="1"/>
</dbReference>
<dbReference type="FunFam" id="3.30.200.20:FF:000336">
    <property type="entry name" value="Eukaryotic elongation factor 2 kinase"/>
    <property type="match status" value="1"/>
</dbReference>
<dbReference type="Gene3D" id="3.20.200.10">
    <property type="entry name" value="MHCK/EF2 kinase"/>
    <property type="match status" value="1"/>
</dbReference>
<dbReference type="Gene3D" id="3.30.200.20">
    <property type="entry name" value="Phosphorylase Kinase, domain 1"/>
    <property type="match status" value="2"/>
</dbReference>
<dbReference type="Gene3D" id="1.25.40.10">
    <property type="entry name" value="Tetratricopeptide repeat domain"/>
    <property type="match status" value="1"/>
</dbReference>
<dbReference type="InterPro" id="IPR004166">
    <property type="entry name" value="a-kinase_dom"/>
</dbReference>
<dbReference type="InterPro" id="IPR051852">
    <property type="entry name" value="Alpha-type_PK"/>
</dbReference>
<dbReference type="InterPro" id="IPR017400">
    <property type="entry name" value="eEF-2K"/>
</dbReference>
<dbReference type="InterPro" id="IPR047588">
    <property type="entry name" value="eEF2K_a_kinase_dom"/>
</dbReference>
<dbReference type="InterPro" id="IPR011009">
    <property type="entry name" value="Kinase-like_dom_sf"/>
</dbReference>
<dbReference type="InterPro" id="IPR011990">
    <property type="entry name" value="TPR-like_helical_dom_sf"/>
</dbReference>
<dbReference type="PANTHER" id="PTHR45992:SF2">
    <property type="entry name" value="EUKARYOTIC ELONGATION FACTOR 2 KINASE"/>
    <property type="match status" value="1"/>
</dbReference>
<dbReference type="PANTHER" id="PTHR45992">
    <property type="entry name" value="EUKARYOTIC ELONGATION FACTOR 2 KINASE-RELATED"/>
    <property type="match status" value="1"/>
</dbReference>
<dbReference type="Pfam" id="PF02816">
    <property type="entry name" value="Alpha_kinase"/>
    <property type="match status" value="1"/>
</dbReference>
<dbReference type="PIRSF" id="PIRSF038139">
    <property type="entry name" value="Elongation_factor_2_kinase"/>
    <property type="match status" value="1"/>
</dbReference>
<dbReference type="SMART" id="SM00811">
    <property type="entry name" value="Alpha_kinase"/>
    <property type="match status" value="1"/>
</dbReference>
<dbReference type="SUPFAM" id="SSF81901">
    <property type="entry name" value="HCP-like"/>
    <property type="match status" value="1"/>
</dbReference>
<dbReference type="SUPFAM" id="SSF56112">
    <property type="entry name" value="Protein kinase-like (PK-like)"/>
    <property type="match status" value="1"/>
</dbReference>
<dbReference type="PROSITE" id="PS51158">
    <property type="entry name" value="ALPHA_KINASE"/>
    <property type="match status" value="1"/>
</dbReference>
<feature type="initiator methionine" description="Removed" evidence="2">
    <location>
        <position position="1"/>
    </location>
</feature>
<feature type="chain" id="PRO_0000086937" description="Eukaryotic elongation factor 2 kinase">
    <location>
        <begin position="2"/>
        <end position="724"/>
    </location>
</feature>
<feature type="domain" description="Alpha-type protein kinase" evidence="4">
    <location>
        <begin position="115"/>
        <end position="325"/>
    </location>
</feature>
<feature type="region of interest" description="Calmodulin-binding" evidence="2">
    <location>
        <begin position="80"/>
        <end position="93"/>
    </location>
</feature>
<feature type="region of interest" description="Disordered" evidence="5">
    <location>
        <begin position="353"/>
        <end position="476"/>
    </location>
</feature>
<feature type="compositionally biased region" description="Low complexity" evidence="5">
    <location>
        <begin position="358"/>
        <end position="376"/>
    </location>
</feature>
<feature type="compositionally biased region" description="Polar residues" evidence="5">
    <location>
        <begin position="385"/>
        <end position="403"/>
    </location>
</feature>
<feature type="compositionally biased region" description="Basic and acidic residues" evidence="5">
    <location>
        <begin position="421"/>
        <end position="435"/>
    </location>
</feature>
<feature type="compositionally biased region" description="Basic and acidic residues" evidence="5">
    <location>
        <begin position="444"/>
        <end position="469"/>
    </location>
</feature>
<feature type="binding site" evidence="1">
    <location>
        <begin position="295"/>
        <end position="301"/>
    </location>
    <ligand>
        <name>ATP</name>
        <dbReference type="ChEBI" id="CHEBI:30616"/>
    </ligand>
</feature>
<feature type="modified residue" description="N-acetylalanine" evidence="2">
    <location>
        <position position="2"/>
    </location>
</feature>
<feature type="modified residue" description="Phosphoserine" evidence="2">
    <location>
        <position position="27"/>
    </location>
</feature>
<feature type="modified residue" description="Phosphoserine; by autocatalysis" evidence="2">
    <location>
        <position position="61"/>
    </location>
</feature>
<feature type="modified residue" description="Phosphoserine" evidence="9">
    <location>
        <position position="70"/>
    </location>
</feature>
<feature type="modified residue" description="Phosphoserine" evidence="2">
    <location>
        <position position="73"/>
    </location>
</feature>
<feature type="modified residue" description="Phosphoserine" evidence="10">
    <location>
        <position position="77"/>
    </location>
</feature>
<feature type="modified residue" description="Phosphoserine" evidence="2">
    <location>
        <position position="242"/>
    </location>
</feature>
<feature type="modified residue" description="Phosphothreonine; by autocatalysis" evidence="2">
    <location>
        <position position="347"/>
    </location>
</feature>
<feature type="modified residue" description="Phosphothreonine; by autocatalysis" evidence="2">
    <location>
        <position position="352"/>
    </location>
</feature>
<feature type="modified residue" description="Phosphoserine; by MAPK13 and CDK1" evidence="2">
    <location>
        <position position="358"/>
    </location>
</feature>
<feature type="modified residue" description="Phosphoserine; by autocatalysis, RPS6KA1 and RPS6KB1" evidence="2">
    <location>
        <position position="365"/>
    </location>
</feature>
<feature type="modified residue" description="Phosphoserine" evidence="10">
    <location>
        <position position="391"/>
    </location>
</feature>
<feature type="modified residue" description="Phosphoserine; by AMPK" evidence="2">
    <location>
        <position position="397"/>
    </location>
</feature>
<feature type="modified residue" description="Phosphoserine" evidence="2">
    <location>
        <position position="434"/>
    </location>
</feature>
<feature type="modified residue" description="Phosphoserine" evidence="10">
    <location>
        <position position="444"/>
    </location>
</feature>
<feature type="modified residue" description="Phosphoserine" evidence="2">
    <location>
        <position position="469"/>
    </location>
</feature>
<feature type="modified residue" description="Phosphoserine; by autocatalysis" evidence="2">
    <location>
        <position position="473"/>
    </location>
</feature>
<feature type="modified residue" description="Phosphoserine" evidence="2">
    <location>
        <position position="476"/>
    </location>
</feature>
<feature type="modified residue" description="Phosphoserine; by PKA" evidence="3">
    <location>
        <position position="499"/>
    </location>
</feature>
<accession>O08796</accession>
<proteinExistence type="evidence at protein level"/>
<organism>
    <name type="scientific">Mus musculus</name>
    <name type="common">Mouse</name>
    <dbReference type="NCBI Taxonomy" id="10090"/>
    <lineage>
        <taxon>Eukaryota</taxon>
        <taxon>Metazoa</taxon>
        <taxon>Chordata</taxon>
        <taxon>Craniata</taxon>
        <taxon>Vertebrata</taxon>
        <taxon>Euteleostomi</taxon>
        <taxon>Mammalia</taxon>
        <taxon>Eutheria</taxon>
        <taxon>Euarchontoglires</taxon>
        <taxon>Glires</taxon>
        <taxon>Rodentia</taxon>
        <taxon>Myomorpha</taxon>
        <taxon>Muroidea</taxon>
        <taxon>Muridae</taxon>
        <taxon>Murinae</taxon>
        <taxon>Mus</taxon>
        <taxon>Mus</taxon>
    </lineage>
</organism>
<sequence>MADEDLIFCLEGVDGGRCSRAGHNADSDTDSDDDEGYFICPITDDHMSNQNVSSKVQSYYSNLTKTECGSTGSPASSFHFKEAWKHAIEKAKHMPDPWAEFHLEDIATEHATRHRYNAVTGEWLKDEVLIKMASQPFGRGAMRECFRTKKLSNFLHAQQWKGASNYVAKRYIEPVDRSVYFEDVQLQMEAKLWGEDYNRHKPPKQVDIMQMCIIELKDRPGQPLFHLEHYIEGKYIKYNSNSGFVRDDNIRLTPQAFSHFTFERSGHQLIVVDIQGVGDLYTDPQIHTEKGTDFGDGNLGVRGMALFFYSHACNRICQSMGLTPFDLSPREQDAVNQSTRLLQSAKTILRGTEEKCGSPRIRTLSSSRPPLLLRLSENSGDENMSDVTFDSLPSSPSSATPHSQKLDHLHWPVFGDLDNMGPRDHDRMDNHRDSENSGDSGYPSEKRSDLDDPEPREHGHSNGNRRHESDEDSLGSSGRVCVETWNLLNPSRLHLPRPSAVALEVQRLNALDLGRKIGKSVLGKVHLAMVRYHEGGRFCEKDEEWDRESAIFHLEHAADLGELEAIVGLGLMYSQLPHHILADVSLKETEENKTKGFDYLLKAAEAGDRHSMILVARAFDTGLNLSPDRCQDWSEALHWYNTALETTDCDEGGEYDGIQDEPQYALLAREAEMLLTGGFGLDKNPQRSGDLYTQAAEAAMEAMKGRLANQYYEKAEEAWAQMEE</sequence>
<keyword id="KW-0007">Acetylation</keyword>
<keyword id="KW-0067">ATP-binding</keyword>
<keyword id="KW-0106">Calcium</keyword>
<keyword id="KW-0112">Calmodulin-binding</keyword>
<keyword id="KW-0418">Kinase</keyword>
<keyword id="KW-0547">Nucleotide-binding</keyword>
<keyword id="KW-0597">Phosphoprotein</keyword>
<keyword id="KW-1185">Reference proteome</keyword>
<keyword id="KW-0723">Serine/threonine-protein kinase</keyword>
<keyword id="KW-0808">Transferase</keyword>
<reference key="1">
    <citation type="journal article" date="1997" name="Proc. Natl. Acad. Sci. U.S.A.">
        <title>Identification of a new class of protein kinases represented by eukaryotic elongation factor-2 kinase.</title>
        <authorList>
            <person name="Ryazanov A.G."/>
            <person name="Ward M.D."/>
            <person name="Mendola C.E."/>
            <person name="Pavur K.S."/>
            <person name="Dorovkov M.V."/>
            <person name="Wiedmann M."/>
            <person name="Erdjument-Bromage H."/>
            <person name="Tempst P."/>
            <person name="Parmer T.G."/>
            <person name="Prostko C.R."/>
            <person name="Germino F.J."/>
            <person name="Hait W.N."/>
        </authorList>
    </citation>
    <scope>NUCLEOTIDE SEQUENCE [MRNA]</scope>
    <scope>CATALYTIC ACTIVITY</scope>
    <scope>FUNCTION</scope>
    <scope>TISSUE SPECIFICITY</scope>
    <source>
        <strain>BALB/cJ</strain>
        <tissue>Spleen</tissue>
    </source>
</reference>
<reference key="2">
    <citation type="journal article" date="2004" name="Genome Res.">
        <title>The status, quality, and expansion of the NIH full-length cDNA project: the Mammalian Gene Collection (MGC).</title>
        <authorList>
            <consortium name="The MGC Project Team"/>
        </authorList>
    </citation>
    <scope>NUCLEOTIDE SEQUENCE [LARGE SCALE MRNA]</scope>
    <source>
        <strain>Czech II</strain>
        <tissue>Mammary gland</tissue>
    </source>
</reference>
<reference key="3">
    <citation type="journal article" date="2007" name="Proc. Natl. Acad. Sci. U.S.A.">
        <title>Large-scale phosphorylation analysis of mouse liver.</title>
        <authorList>
            <person name="Villen J."/>
            <person name="Beausoleil S.A."/>
            <person name="Gerber S.A."/>
            <person name="Gygi S.P."/>
        </authorList>
    </citation>
    <scope>PHOSPHORYLATION [LARGE SCALE ANALYSIS] AT SER-70</scope>
    <scope>IDENTIFICATION BY MASS SPECTROMETRY [LARGE SCALE ANALYSIS]</scope>
    <source>
        <tissue>Liver</tissue>
    </source>
</reference>
<reference key="4">
    <citation type="journal article" date="2010" name="Cell">
        <title>A tissue-specific atlas of mouse protein phosphorylation and expression.</title>
        <authorList>
            <person name="Huttlin E.L."/>
            <person name="Jedrychowski M.P."/>
            <person name="Elias J.E."/>
            <person name="Goswami T."/>
            <person name="Rad R."/>
            <person name="Beausoleil S.A."/>
            <person name="Villen J."/>
            <person name="Haas W."/>
            <person name="Sowa M.E."/>
            <person name="Gygi S.P."/>
        </authorList>
    </citation>
    <scope>PHOSPHORYLATION [LARGE SCALE ANALYSIS] AT SER-77; SER-391 AND SER-444</scope>
    <scope>IDENTIFICATION BY MASS SPECTROMETRY [LARGE SCALE ANALYSIS]</scope>
    <source>
        <tissue>Brain</tissue>
        <tissue>Brown adipose tissue</tissue>
        <tissue>Kidney</tissue>
        <tissue>Lung</tissue>
        <tissue>Spleen</tissue>
        <tissue>Testis</tissue>
    </source>
</reference>
<reference key="5">
    <citation type="journal article" date="2021" name="Nat. Commun.">
        <title>Functionally distinct roles for eEF2K in the control of ribosome availability and p-body abundance.</title>
        <authorList>
            <person name="Smith P.R."/>
            <person name="Loerch S."/>
            <person name="Kunder N."/>
            <person name="Stanowick A.D."/>
            <person name="Lou T.F."/>
            <person name="Campbell Z.T."/>
        </authorList>
    </citation>
    <scope>FUNCTION</scope>
    <scope>CATALYTIC ACTIVITY</scope>
</reference>
<gene>
    <name type="primary">Eef2k</name>
</gene>